<organism>
    <name type="scientific">Helicobacter hepaticus (strain ATCC 51449 / 3B1)</name>
    <dbReference type="NCBI Taxonomy" id="235279"/>
    <lineage>
        <taxon>Bacteria</taxon>
        <taxon>Pseudomonadati</taxon>
        <taxon>Campylobacterota</taxon>
        <taxon>Epsilonproteobacteria</taxon>
        <taxon>Campylobacterales</taxon>
        <taxon>Helicobacteraceae</taxon>
        <taxon>Helicobacter</taxon>
    </lineage>
</organism>
<keyword id="KW-0067">ATP-binding</keyword>
<keyword id="KW-0173">Coenzyme A biosynthesis</keyword>
<keyword id="KW-0963">Cytoplasm</keyword>
<keyword id="KW-0418">Kinase</keyword>
<keyword id="KW-0547">Nucleotide-binding</keyword>
<keyword id="KW-1185">Reference proteome</keyword>
<keyword id="KW-0808">Transferase</keyword>
<gene>
    <name evidence="1" type="primary">coaE</name>
    <name type="ordered locus">HH_1700</name>
</gene>
<name>COAE_HELHP</name>
<accession>Q7VFH6</accession>
<evidence type="ECO:0000255" key="1">
    <source>
        <dbReference type="HAMAP-Rule" id="MF_00376"/>
    </source>
</evidence>
<protein>
    <recommendedName>
        <fullName evidence="1">Dephospho-CoA kinase</fullName>
        <ecNumber evidence="1">2.7.1.24</ecNumber>
    </recommendedName>
    <alternativeName>
        <fullName evidence="1">Dephosphocoenzyme A kinase</fullName>
    </alternativeName>
</protein>
<sequence length="207" mass="23326">MDKQLRYAIALTGSIGSGKSTFVSLLSLYGYQSICADSIAHKVLEEHSAEVIAYFGNEILQSDNTINRKVLGNIIFASSSKREELQAILHPHIQKAILTQAQQLEEKKVWYFIDIPLFFEVGGKEAYPVARSLVIYTPKAKAIERIMKRNNFTFEEAKARIDAQMPIENKCRLADDIINNEGDLRTLQHNAETYIQSLPCVDCVQSS</sequence>
<comment type="function">
    <text evidence="1">Catalyzes the phosphorylation of the 3'-hydroxyl group of dephosphocoenzyme A to form coenzyme A.</text>
</comment>
<comment type="catalytic activity">
    <reaction evidence="1">
        <text>3'-dephospho-CoA + ATP = ADP + CoA + H(+)</text>
        <dbReference type="Rhea" id="RHEA:18245"/>
        <dbReference type="ChEBI" id="CHEBI:15378"/>
        <dbReference type="ChEBI" id="CHEBI:30616"/>
        <dbReference type="ChEBI" id="CHEBI:57287"/>
        <dbReference type="ChEBI" id="CHEBI:57328"/>
        <dbReference type="ChEBI" id="CHEBI:456216"/>
        <dbReference type="EC" id="2.7.1.24"/>
    </reaction>
</comment>
<comment type="pathway">
    <text evidence="1">Cofactor biosynthesis; coenzyme A biosynthesis; CoA from (R)-pantothenate: step 5/5.</text>
</comment>
<comment type="subcellular location">
    <subcellularLocation>
        <location evidence="1">Cytoplasm</location>
    </subcellularLocation>
</comment>
<comment type="similarity">
    <text evidence="1">Belongs to the CoaE family.</text>
</comment>
<feature type="chain" id="PRO_0000172948" description="Dephospho-CoA kinase">
    <location>
        <begin position="1"/>
        <end position="207"/>
    </location>
</feature>
<feature type="domain" description="DPCK" evidence="1">
    <location>
        <begin position="8"/>
        <end position="207"/>
    </location>
</feature>
<feature type="binding site" evidence="1">
    <location>
        <begin position="16"/>
        <end position="21"/>
    </location>
    <ligand>
        <name>ATP</name>
        <dbReference type="ChEBI" id="CHEBI:30616"/>
    </ligand>
</feature>
<dbReference type="EC" id="2.7.1.24" evidence="1"/>
<dbReference type="EMBL" id="AE017125">
    <property type="protein sequence ID" value="AAP78297.1"/>
    <property type="molecule type" value="Genomic_DNA"/>
</dbReference>
<dbReference type="RefSeq" id="WP_011116539.1">
    <property type="nucleotide sequence ID" value="NC_004917.1"/>
</dbReference>
<dbReference type="SMR" id="Q7VFH6"/>
<dbReference type="STRING" id="235279.HH_1700"/>
<dbReference type="KEGG" id="hhe:HH_1700"/>
<dbReference type="eggNOG" id="COG0237">
    <property type="taxonomic scope" value="Bacteria"/>
</dbReference>
<dbReference type="HOGENOM" id="CLU_057180_0_0_7"/>
<dbReference type="OrthoDB" id="9812943at2"/>
<dbReference type="UniPathway" id="UPA00241">
    <property type="reaction ID" value="UER00356"/>
</dbReference>
<dbReference type="Proteomes" id="UP000002495">
    <property type="component" value="Chromosome"/>
</dbReference>
<dbReference type="GO" id="GO:0005737">
    <property type="term" value="C:cytoplasm"/>
    <property type="evidence" value="ECO:0007669"/>
    <property type="project" value="UniProtKB-SubCell"/>
</dbReference>
<dbReference type="GO" id="GO:0005524">
    <property type="term" value="F:ATP binding"/>
    <property type="evidence" value="ECO:0007669"/>
    <property type="project" value="UniProtKB-UniRule"/>
</dbReference>
<dbReference type="GO" id="GO:0004140">
    <property type="term" value="F:dephospho-CoA kinase activity"/>
    <property type="evidence" value="ECO:0007669"/>
    <property type="project" value="UniProtKB-UniRule"/>
</dbReference>
<dbReference type="GO" id="GO:0015937">
    <property type="term" value="P:coenzyme A biosynthetic process"/>
    <property type="evidence" value="ECO:0007669"/>
    <property type="project" value="UniProtKB-UniRule"/>
</dbReference>
<dbReference type="CDD" id="cd02022">
    <property type="entry name" value="DPCK"/>
    <property type="match status" value="1"/>
</dbReference>
<dbReference type="Gene3D" id="3.40.50.300">
    <property type="entry name" value="P-loop containing nucleotide triphosphate hydrolases"/>
    <property type="match status" value="1"/>
</dbReference>
<dbReference type="HAMAP" id="MF_00376">
    <property type="entry name" value="Dephospho_CoA_kinase"/>
    <property type="match status" value="1"/>
</dbReference>
<dbReference type="InterPro" id="IPR001977">
    <property type="entry name" value="Depp_CoAkinase"/>
</dbReference>
<dbReference type="InterPro" id="IPR027417">
    <property type="entry name" value="P-loop_NTPase"/>
</dbReference>
<dbReference type="NCBIfam" id="TIGR00152">
    <property type="entry name" value="dephospho-CoA kinase"/>
    <property type="match status" value="1"/>
</dbReference>
<dbReference type="PANTHER" id="PTHR10695:SF46">
    <property type="entry name" value="BIFUNCTIONAL COENZYME A SYNTHASE-RELATED"/>
    <property type="match status" value="1"/>
</dbReference>
<dbReference type="PANTHER" id="PTHR10695">
    <property type="entry name" value="DEPHOSPHO-COA KINASE-RELATED"/>
    <property type="match status" value="1"/>
</dbReference>
<dbReference type="Pfam" id="PF01121">
    <property type="entry name" value="CoaE"/>
    <property type="match status" value="1"/>
</dbReference>
<dbReference type="SUPFAM" id="SSF52540">
    <property type="entry name" value="P-loop containing nucleoside triphosphate hydrolases"/>
    <property type="match status" value="1"/>
</dbReference>
<dbReference type="PROSITE" id="PS51219">
    <property type="entry name" value="DPCK"/>
    <property type="match status" value="1"/>
</dbReference>
<reference key="1">
    <citation type="journal article" date="2003" name="Proc. Natl. Acad. Sci. U.S.A.">
        <title>The complete genome sequence of the carcinogenic bacterium Helicobacter hepaticus.</title>
        <authorList>
            <person name="Suerbaum S."/>
            <person name="Josenhans C."/>
            <person name="Sterzenbach T."/>
            <person name="Drescher B."/>
            <person name="Brandt P."/>
            <person name="Bell M."/>
            <person name="Droege M."/>
            <person name="Fartmann B."/>
            <person name="Fischer H.-P."/>
            <person name="Ge Z."/>
            <person name="Hoerster A."/>
            <person name="Holland R."/>
            <person name="Klein K."/>
            <person name="Koenig J."/>
            <person name="Macko L."/>
            <person name="Mendz G.L."/>
            <person name="Nyakatura G."/>
            <person name="Schauer D.B."/>
            <person name="Shen Z."/>
            <person name="Weber J."/>
            <person name="Frosch M."/>
            <person name="Fox J.G."/>
        </authorList>
    </citation>
    <scope>NUCLEOTIDE SEQUENCE [LARGE SCALE GENOMIC DNA]</scope>
    <source>
        <strain>ATCC 51449 / 3B1</strain>
    </source>
</reference>
<proteinExistence type="inferred from homology"/>